<gene>
    <name evidence="1" type="primary">nuoD</name>
    <name type="ordered locus">LIC_12744</name>
</gene>
<reference key="1">
    <citation type="journal article" date="2004" name="J. Bacteriol.">
        <title>Comparative genomics of two Leptospira interrogans serovars reveals novel insights into physiology and pathogenesis.</title>
        <authorList>
            <person name="Nascimento A.L.T.O."/>
            <person name="Ko A.I."/>
            <person name="Martins E.A.L."/>
            <person name="Monteiro-Vitorello C.B."/>
            <person name="Ho P.L."/>
            <person name="Haake D.A."/>
            <person name="Verjovski-Almeida S."/>
            <person name="Hartskeerl R.A."/>
            <person name="Marques M.V."/>
            <person name="Oliveira M.C."/>
            <person name="Menck C.F.M."/>
            <person name="Leite L.C.C."/>
            <person name="Carrer H."/>
            <person name="Coutinho L.L."/>
            <person name="Degrave W.M."/>
            <person name="Dellagostin O.A."/>
            <person name="El-Dorry H."/>
            <person name="Ferro E.S."/>
            <person name="Ferro M.I.T."/>
            <person name="Furlan L.R."/>
            <person name="Gamberini M."/>
            <person name="Giglioti E.A."/>
            <person name="Goes-Neto A."/>
            <person name="Goldman G.H."/>
            <person name="Goldman M.H.S."/>
            <person name="Harakava R."/>
            <person name="Jeronimo S.M.B."/>
            <person name="Junqueira-de-Azevedo I.L.M."/>
            <person name="Kimura E.T."/>
            <person name="Kuramae E.E."/>
            <person name="Lemos E.G.M."/>
            <person name="Lemos M.V.F."/>
            <person name="Marino C.L."/>
            <person name="Nunes L.R."/>
            <person name="de Oliveira R.C."/>
            <person name="Pereira G.G."/>
            <person name="Reis M.S."/>
            <person name="Schriefer A."/>
            <person name="Siqueira W.J."/>
            <person name="Sommer P."/>
            <person name="Tsai S.M."/>
            <person name="Simpson A.J.G."/>
            <person name="Ferro J.A."/>
            <person name="Camargo L.E.A."/>
            <person name="Kitajima J.P."/>
            <person name="Setubal J.C."/>
            <person name="Van Sluys M.A."/>
        </authorList>
    </citation>
    <scope>NUCLEOTIDE SEQUENCE [LARGE SCALE GENOMIC DNA]</scope>
    <source>
        <strain>Fiocruz L1-130</strain>
    </source>
</reference>
<comment type="function">
    <text evidence="1">NDH-1 shuttles electrons from NADH, via FMN and iron-sulfur (Fe-S) centers, to quinones in the respiratory chain. The immediate electron acceptor for the enzyme in this species is believed to be ubiquinone. Couples the redox reaction to proton translocation (for every two electrons transferred, four hydrogen ions are translocated across the cytoplasmic membrane), and thus conserves the redox energy in a proton gradient.</text>
</comment>
<comment type="catalytic activity">
    <reaction evidence="1">
        <text>a quinone + NADH + 5 H(+)(in) = a quinol + NAD(+) + 4 H(+)(out)</text>
        <dbReference type="Rhea" id="RHEA:57888"/>
        <dbReference type="ChEBI" id="CHEBI:15378"/>
        <dbReference type="ChEBI" id="CHEBI:24646"/>
        <dbReference type="ChEBI" id="CHEBI:57540"/>
        <dbReference type="ChEBI" id="CHEBI:57945"/>
        <dbReference type="ChEBI" id="CHEBI:132124"/>
    </reaction>
</comment>
<comment type="subunit">
    <text evidence="1">NDH-1 is composed of 14 different subunits. Subunits NuoB, C, D, E, F, and G constitute the peripheral sector of the complex.</text>
</comment>
<comment type="subcellular location">
    <subcellularLocation>
        <location evidence="1">Cell inner membrane</location>
        <topology evidence="1">Peripheral membrane protein</topology>
        <orientation evidence="1">Cytoplasmic side</orientation>
    </subcellularLocation>
</comment>
<comment type="similarity">
    <text evidence="1">Belongs to the complex I 49 kDa subunit family.</text>
</comment>
<organism>
    <name type="scientific">Leptospira interrogans serogroup Icterohaemorrhagiae serovar copenhageni (strain Fiocruz L1-130)</name>
    <dbReference type="NCBI Taxonomy" id="267671"/>
    <lineage>
        <taxon>Bacteria</taxon>
        <taxon>Pseudomonadati</taxon>
        <taxon>Spirochaetota</taxon>
        <taxon>Spirochaetia</taxon>
        <taxon>Leptospirales</taxon>
        <taxon>Leptospiraceae</taxon>
        <taxon>Leptospira</taxon>
    </lineage>
</organism>
<evidence type="ECO:0000255" key="1">
    <source>
        <dbReference type="HAMAP-Rule" id="MF_01358"/>
    </source>
</evidence>
<dbReference type="EC" id="7.1.1.-" evidence="1"/>
<dbReference type="EMBL" id="AE016823">
    <property type="protein sequence ID" value="AAS71301.1"/>
    <property type="molecule type" value="Genomic_DNA"/>
</dbReference>
<dbReference type="RefSeq" id="WP_000990075.1">
    <property type="nucleotide sequence ID" value="NC_005823.1"/>
</dbReference>
<dbReference type="SMR" id="Q72NT5"/>
<dbReference type="KEGG" id="lic:LIC_12744"/>
<dbReference type="HOGENOM" id="CLU_015134_1_2_12"/>
<dbReference type="Proteomes" id="UP000007037">
    <property type="component" value="Chromosome I"/>
</dbReference>
<dbReference type="GO" id="GO:0005886">
    <property type="term" value="C:plasma membrane"/>
    <property type="evidence" value="ECO:0007669"/>
    <property type="project" value="UniProtKB-SubCell"/>
</dbReference>
<dbReference type="GO" id="GO:0051287">
    <property type="term" value="F:NAD binding"/>
    <property type="evidence" value="ECO:0007669"/>
    <property type="project" value="InterPro"/>
</dbReference>
<dbReference type="GO" id="GO:0050136">
    <property type="term" value="F:NADH:ubiquinone reductase (non-electrogenic) activity"/>
    <property type="evidence" value="ECO:0007669"/>
    <property type="project" value="UniProtKB-UniRule"/>
</dbReference>
<dbReference type="GO" id="GO:0048038">
    <property type="term" value="F:quinone binding"/>
    <property type="evidence" value="ECO:0007669"/>
    <property type="project" value="UniProtKB-KW"/>
</dbReference>
<dbReference type="Gene3D" id="1.10.645.10">
    <property type="entry name" value="Cytochrome-c3 Hydrogenase, chain B"/>
    <property type="match status" value="1"/>
</dbReference>
<dbReference type="HAMAP" id="MF_01358">
    <property type="entry name" value="NDH1_NuoD"/>
    <property type="match status" value="1"/>
</dbReference>
<dbReference type="InterPro" id="IPR001135">
    <property type="entry name" value="NADH_Q_OxRdtase_suD"/>
</dbReference>
<dbReference type="InterPro" id="IPR022885">
    <property type="entry name" value="NDH1_su_D/H"/>
</dbReference>
<dbReference type="InterPro" id="IPR029014">
    <property type="entry name" value="NiFe-Hase_large"/>
</dbReference>
<dbReference type="NCBIfam" id="NF004739">
    <property type="entry name" value="PRK06075.1"/>
    <property type="match status" value="1"/>
</dbReference>
<dbReference type="PANTHER" id="PTHR11993:SF10">
    <property type="entry name" value="NADH DEHYDROGENASE [UBIQUINONE] IRON-SULFUR PROTEIN 2, MITOCHONDRIAL"/>
    <property type="match status" value="1"/>
</dbReference>
<dbReference type="PANTHER" id="PTHR11993">
    <property type="entry name" value="NADH-UBIQUINONE OXIDOREDUCTASE 49 KDA SUBUNIT"/>
    <property type="match status" value="1"/>
</dbReference>
<dbReference type="Pfam" id="PF00346">
    <property type="entry name" value="Complex1_49kDa"/>
    <property type="match status" value="1"/>
</dbReference>
<dbReference type="SUPFAM" id="SSF56762">
    <property type="entry name" value="HydB/Nqo4-like"/>
    <property type="match status" value="1"/>
</dbReference>
<accession>Q72NT5</accession>
<keyword id="KW-0997">Cell inner membrane</keyword>
<keyword id="KW-1003">Cell membrane</keyword>
<keyword id="KW-0472">Membrane</keyword>
<keyword id="KW-0520">NAD</keyword>
<keyword id="KW-0874">Quinone</keyword>
<keyword id="KW-1278">Translocase</keyword>
<keyword id="KW-0813">Transport</keyword>
<keyword id="KW-0830">Ubiquinone</keyword>
<feature type="chain" id="PRO_0000357839" description="NADH-quinone oxidoreductase subunit D">
    <location>
        <begin position="1"/>
        <end position="405"/>
    </location>
</feature>
<sequence>MMYEKTAEHFEQKYKNLPEGHLLVNLGPSHPATHGILQNVIQIDGERIVEAESVIGYVHRCFEKLGERYTYNQFLVCTDRMNYVSTPLNNIGWILAVEKMMQIEVPDRVTYVRMIISELSRIIDHIICTGILGVDLGAFSGMLHLFHHRENIYQIIEKLTGARLTTTFCRIGGLEKDIYPDFVKEVKLVCKGLKPAIEEFNSLLLKNKIFLGRTEGIGGISAENAIAYGYTGPNLRAAGVDWDVRKDEPYLFYDKVDFDIPIGEDGSVLHRSLVRMEEMRQSIRIIEQLVDGIPSGPWHADLPHAYLPEKHKVYNNMEELIYHFKIIMHGVKVPPGEYYMATEAANGELGFYIVSEGEKSPWRVHVRRPCFWYYQSFAELVRGGLLADSVATMSSLNVIAGELDC</sequence>
<proteinExistence type="inferred from homology"/>
<protein>
    <recommendedName>
        <fullName evidence="1">NADH-quinone oxidoreductase subunit D</fullName>
        <ecNumber evidence="1">7.1.1.-</ecNumber>
    </recommendedName>
    <alternativeName>
        <fullName evidence="1">NADH dehydrogenase I subunit D</fullName>
    </alternativeName>
    <alternativeName>
        <fullName evidence="1">NDH-1 subunit D</fullName>
    </alternativeName>
</protein>
<name>NUOD_LEPIC</name>